<feature type="chain" id="PRO_0000196032" description="Small ribosomal subunit protein bS1">
    <location>
        <begin position="1"/>
        <end position="569"/>
    </location>
</feature>
<feature type="domain" description="S1 motif 1" evidence="2">
    <location>
        <begin position="52"/>
        <end position="116"/>
    </location>
</feature>
<feature type="domain" description="S1 motif 2" evidence="2">
    <location>
        <begin position="134"/>
        <end position="199"/>
    </location>
</feature>
<feature type="domain" description="S1 motif 3" evidence="2">
    <location>
        <begin position="220"/>
        <end position="288"/>
    </location>
</feature>
<feature type="domain" description="S1 motif 4" evidence="2">
    <location>
        <begin position="305"/>
        <end position="375"/>
    </location>
</feature>
<feature type="domain" description="S1 motif 5" evidence="2">
    <location>
        <begin position="392"/>
        <end position="462"/>
    </location>
</feature>
<feature type="domain" description="S1 motif 6" evidence="2">
    <location>
        <begin position="479"/>
        <end position="548"/>
    </location>
</feature>
<dbReference type="EMBL" id="AE001273">
    <property type="protein sequence ID" value="AAC67689.1"/>
    <property type="molecule type" value="Genomic_DNA"/>
</dbReference>
<dbReference type="PIR" id="A71556">
    <property type="entry name" value="A71556"/>
</dbReference>
<dbReference type="RefSeq" id="NP_219601.1">
    <property type="nucleotide sequence ID" value="NC_000117.1"/>
</dbReference>
<dbReference type="RefSeq" id="WP_009873044.1">
    <property type="nucleotide sequence ID" value="NC_000117.1"/>
</dbReference>
<dbReference type="SMR" id="O84100"/>
<dbReference type="FunCoup" id="O84100">
    <property type="interactions" value="301"/>
</dbReference>
<dbReference type="STRING" id="272561.CT_098"/>
<dbReference type="EnsemblBacteria" id="AAC67689">
    <property type="protein sequence ID" value="AAC67689"/>
    <property type="gene ID" value="CT_098"/>
</dbReference>
<dbReference type="GeneID" id="884179"/>
<dbReference type="KEGG" id="ctr:CT_098"/>
<dbReference type="PATRIC" id="fig|272561.5.peg.108"/>
<dbReference type="HOGENOM" id="CLU_015805_2_1_0"/>
<dbReference type="InParanoid" id="O84100"/>
<dbReference type="OrthoDB" id="9804077at2"/>
<dbReference type="Proteomes" id="UP000000431">
    <property type="component" value="Chromosome"/>
</dbReference>
<dbReference type="GO" id="GO:0022627">
    <property type="term" value="C:cytosolic small ribosomal subunit"/>
    <property type="evidence" value="ECO:0000318"/>
    <property type="project" value="GO_Central"/>
</dbReference>
<dbReference type="GO" id="GO:0003729">
    <property type="term" value="F:mRNA binding"/>
    <property type="evidence" value="ECO:0000318"/>
    <property type="project" value="GO_Central"/>
</dbReference>
<dbReference type="GO" id="GO:0003735">
    <property type="term" value="F:structural constituent of ribosome"/>
    <property type="evidence" value="ECO:0000318"/>
    <property type="project" value="GO_Central"/>
</dbReference>
<dbReference type="GO" id="GO:0006412">
    <property type="term" value="P:translation"/>
    <property type="evidence" value="ECO:0000318"/>
    <property type="project" value="GO_Central"/>
</dbReference>
<dbReference type="CDD" id="cd05687">
    <property type="entry name" value="S1_RPS1_repeat_ec1_hs1"/>
    <property type="match status" value="1"/>
</dbReference>
<dbReference type="CDD" id="cd04465">
    <property type="entry name" value="S1_RPS1_repeat_ec2_hs2"/>
    <property type="match status" value="1"/>
</dbReference>
<dbReference type="CDD" id="cd05688">
    <property type="entry name" value="S1_RPS1_repeat_ec3"/>
    <property type="match status" value="1"/>
</dbReference>
<dbReference type="FunFam" id="2.40.50.140:FF:000011">
    <property type="entry name" value="30S ribosomal protein S1"/>
    <property type="match status" value="2"/>
</dbReference>
<dbReference type="FunFam" id="2.40.50.140:FF:000018">
    <property type="entry name" value="30S ribosomal protein S1"/>
    <property type="match status" value="1"/>
</dbReference>
<dbReference type="FunFam" id="2.40.50.140:FF:000110">
    <property type="entry name" value="30S ribosomal protein S1"/>
    <property type="match status" value="1"/>
</dbReference>
<dbReference type="FunFam" id="2.40.50.140:FF:000103">
    <property type="entry name" value="protein RRP5 homolog"/>
    <property type="match status" value="1"/>
</dbReference>
<dbReference type="Gene3D" id="2.40.50.140">
    <property type="entry name" value="Nucleic acid-binding proteins"/>
    <property type="match status" value="6"/>
</dbReference>
<dbReference type="InterPro" id="IPR012340">
    <property type="entry name" value="NA-bd_OB-fold"/>
</dbReference>
<dbReference type="InterPro" id="IPR050437">
    <property type="entry name" value="Ribos_protein_bS1-like"/>
</dbReference>
<dbReference type="InterPro" id="IPR000110">
    <property type="entry name" value="Ribosomal_bS1"/>
</dbReference>
<dbReference type="InterPro" id="IPR035104">
    <property type="entry name" value="Ribosomal_protein_S1-like"/>
</dbReference>
<dbReference type="InterPro" id="IPR003029">
    <property type="entry name" value="S1_domain"/>
</dbReference>
<dbReference type="NCBIfam" id="NF004953">
    <property type="entry name" value="PRK06299.1-3"/>
    <property type="match status" value="1"/>
</dbReference>
<dbReference type="NCBIfam" id="TIGR00717">
    <property type="entry name" value="rpsA"/>
    <property type="match status" value="1"/>
</dbReference>
<dbReference type="PANTHER" id="PTHR10724">
    <property type="entry name" value="30S RIBOSOMAL PROTEIN S1"/>
    <property type="match status" value="1"/>
</dbReference>
<dbReference type="PANTHER" id="PTHR10724:SF7">
    <property type="entry name" value="SMALL RIBOSOMAL SUBUNIT PROTEIN BS1C"/>
    <property type="match status" value="1"/>
</dbReference>
<dbReference type="Pfam" id="PF00575">
    <property type="entry name" value="S1"/>
    <property type="match status" value="6"/>
</dbReference>
<dbReference type="PRINTS" id="PR00681">
    <property type="entry name" value="RIBOSOMALS1"/>
</dbReference>
<dbReference type="SMART" id="SM00316">
    <property type="entry name" value="S1"/>
    <property type="match status" value="6"/>
</dbReference>
<dbReference type="SUPFAM" id="SSF50249">
    <property type="entry name" value="Nucleic acid-binding proteins"/>
    <property type="match status" value="6"/>
</dbReference>
<dbReference type="PROSITE" id="PS50126">
    <property type="entry name" value="S1"/>
    <property type="match status" value="6"/>
</dbReference>
<organism>
    <name type="scientific">Chlamydia trachomatis serovar D (strain ATCC VR-885 / DSM 19411 / UW-3/Cx)</name>
    <dbReference type="NCBI Taxonomy" id="272561"/>
    <lineage>
        <taxon>Bacteria</taxon>
        <taxon>Pseudomonadati</taxon>
        <taxon>Chlamydiota</taxon>
        <taxon>Chlamydiia</taxon>
        <taxon>Chlamydiales</taxon>
        <taxon>Chlamydiaceae</taxon>
        <taxon>Chlamydia/Chlamydophila group</taxon>
        <taxon>Chlamydia</taxon>
    </lineage>
</organism>
<proteinExistence type="inferred from homology"/>
<comment type="function">
    <text evidence="1">Binds mRNA; thus facilitating recognition of the initiation point. It is needed to translate mRNA with a short Shine-Dalgarno (SD) purine-rich sequence (By similarity).</text>
</comment>
<comment type="similarity">
    <text evidence="3">Belongs to the bacterial ribosomal protein bS1 family.</text>
</comment>
<accession>O84100</accession>
<gene>
    <name type="primary">rpsA</name>
    <name type="synonym">rs1</name>
    <name type="ordered locus">CT_098</name>
</gene>
<reference key="1">
    <citation type="journal article" date="1998" name="Science">
        <title>Genome sequence of an obligate intracellular pathogen of humans: Chlamydia trachomatis.</title>
        <authorList>
            <person name="Stephens R.S."/>
            <person name="Kalman S."/>
            <person name="Lammel C.J."/>
            <person name="Fan J."/>
            <person name="Marathe R."/>
            <person name="Aravind L."/>
            <person name="Mitchell W.P."/>
            <person name="Olinger L."/>
            <person name="Tatusov R.L."/>
            <person name="Zhao Q."/>
            <person name="Koonin E.V."/>
            <person name="Davis R.W."/>
        </authorList>
    </citation>
    <scope>NUCLEOTIDE SEQUENCE [LARGE SCALE GENOMIC DNA]</scope>
    <source>
        <strain>ATCC VR-885 / DSM 19411 / UW-3/Cx</strain>
    </source>
</reference>
<protein>
    <recommendedName>
        <fullName evidence="3">Small ribosomal subunit protein bS1</fullName>
    </recommendedName>
    <alternativeName>
        <fullName>30S ribosomal protein S1</fullName>
    </alternativeName>
</protein>
<sequence length="569" mass="63574">MPKQADYTWGAKKNLDTIACLPEDVKQFKDLLYAMYGFTATEEEPTSEVHPGAILKGTVVDISKDFVVVDVGLKSEGVIPMSEFIDSSEGLTVGAEVEVYLDQTEDDEGKVVLSREKATRQRQWEYILAHCEEGSIVKGQITRKVKGGLIVDIGMEAFLPGSQIDNKKIKNLDDYVGKVCEFKILKINVDRRNVVVSRRELLEAERISKKAELIEQITIGERRKGIVKNITDFGVFLDLDGIDGLLHITDMTWKRIRHPSEMVELNQELEVIILSVDKEKGRVALGLKQKEHNPWEDIEKKYPPGKRVRGKIVKLLPYGAFIEIEEGIEGLIHVSEMSWVKNIVDPNEVVNKGDEVEVVVLSIQKDEGKISLGLKQTKHNPWDNIEEKYPIGLRVTAEIKNLTNYGAFVELEPGIEGLIHISDMSWIKKVSHPSELFKKGNTVEAVILSVDKESKKITLGVKQLTPNPWDEIEVMFPVGSDISGVVTKITAFGAFVELQNGIEGLIHVSELSEKPFAKIEDVLSIGDKVSAKVIKLDPDHKKVSLSIKEFLVHGGDAGHDAEEESSDRD</sequence>
<keyword id="KW-1185">Reference proteome</keyword>
<keyword id="KW-0677">Repeat</keyword>
<keyword id="KW-0687">Ribonucleoprotein</keyword>
<keyword id="KW-0689">Ribosomal protein</keyword>
<keyword id="KW-0694">RNA-binding</keyword>
<name>RS1_CHLTR</name>
<evidence type="ECO:0000250" key="1"/>
<evidence type="ECO:0000255" key="2">
    <source>
        <dbReference type="PROSITE-ProRule" id="PRU00180"/>
    </source>
</evidence>
<evidence type="ECO:0000305" key="3"/>